<gene>
    <name evidence="1" type="primary">queA</name>
    <name type="ordered locus">Mpop_3268</name>
</gene>
<reference key="1">
    <citation type="submission" date="2008-04" db="EMBL/GenBank/DDBJ databases">
        <title>Complete sequence of chromosome of Methylobacterium populi BJ001.</title>
        <authorList>
            <consortium name="US DOE Joint Genome Institute"/>
            <person name="Copeland A."/>
            <person name="Lucas S."/>
            <person name="Lapidus A."/>
            <person name="Glavina del Rio T."/>
            <person name="Dalin E."/>
            <person name="Tice H."/>
            <person name="Bruce D."/>
            <person name="Goodwin L."/>
            <person name="Pitluck S."/>
            <person name="Chertkov O."/>
            <person name="Brettin T."/>
            <person name="Detter J.C."/>
            <person name="Han C."/>
            <person name="Kuske C.R."/>
            <person name="Schmutz J."/>
            <person name="Larimer F."/>
            <person name="Land M."/>
            <person name="Hauser L."/>
            <person name="Kyrpides N."/>
            <person name="Mikhailova N."/>
            <person name="Marx C."/>
            <person name="Richardson P."/>
        </authorList>
    </citation>
    <scope>NUCLEOTIDE SEQUENCE [LARGE SCALE GENOMIC DNA]</scope>
    <source>
        <strain>ATCC BAA-705 / NCIMB 13946 / BJ001</strain>
    </source>
</reference>
<dbReference type="EC" id="2.4.99.17" evidence="1"/>
<dbReference type="EMBL" id="CP001029">
    <property type="protein sequence ID" value="ACB81419.1"/>
    <property type="molecule type" value="Genomic_DNA"/>
</dbReference>
<dbReference type="RefSeq" id="WP_012455136.1">
    <property type="nucleotide sequence ID" value="NC_010725.1"/>
</dbReference>
<dbReference type="SMR" id="B1ZIL2"/>
<dbReference type="STRING" id="441620.Mpop_3268"/>
<dbReference type="KEGG" id="mpo:Mpop_3268"/>
<dbReference type="eggNOG" id="COG0809">
    <property type="taxonomic scope" value="Bacteria"/>
</dbReference>
<dbReference type="HOGENOM" id="CLU_039110_1_1_5"/>
<dbReference type="OrthoDB" id="9805933at2"/>
<dbReference type="UniPathway" id="UPA00392"/>
<dbReference type="Proteomes" id="UP000007136">
    <property type="component" value="Chromosome"/>
</dbReference>
<dbReference type="GO" id="GO:0005737">
    <property type="term" value="C:cytoplasm"/>
    <property type="evidence" value="ECO:0007669"/>
    <property type="project" value="UniProtKB-SubCell"/>
</dbReference>
<dbReference type="GO" id="GO:0051075">
    <property type="term" value="F:S-adenosylmethionine:tRNA ribosyltransferase-isomerase activity"/>
    <property type="evidence" value="ECO:0007669"/>
    <property type="project" value="UniProtKB-EC"/>
</dbReference>
<dbReference type="GO" id="GO:0008616">
    <property type="term" value="P:queuosine biosynthetic process"/>
    <property type="evidence" value="ECO:0007669"/>
    <property type="project" value="UniProtKB-UniRule"/>
</dbReference>
<dbReference type="GO" id="GO:0002099">
    <property type="term" value="P:tRNA wobble guanine modification"/>
    <property type="evidence" value="ECO:0007669"/>
    <property type="project" value="TreeGrafter"/>
</dbReference>
<dbReference type="FunFam" id="3.40.1780.10:FF:000001">
    <property type="entry name" value="S-adenosylmethionine:tRNA ribosyltransferase-isomerase"/>
    <property type="match status" value="1"/>
</dbReference>
<dbReference type="Gene3D" id="2.40.10.240">
    <property type="entry name" value="QueA-like"/>
    <property type="match status" value="1"/>
</dbReference>
<dbReference type="Gene3D" id="3.40.1780.10">
    <property type="entry name" value="QueA-like"/>
    <property type="match status" value="2"/>
</dbReference>
<dbReference type="HAMAP" id="MF_00113">
    <property type="entry name" value="QueA"/>
    <property type="match status" value="1"/>
</dbReference>
<dbReference type="InterPro" id="IPR003699">
    <property type="entry name" value="QueA"/>
</dbReference>
<dbReference type="InterPro" id="IPR042118">
    <property type="entry name" value="QueA_dom1"/>
</dbReference>
<dbReference type="InterPro" id="IPR042119">
    <property type="entry name" value="QueA_dom2"/>
</dbReference>
<dbReference type="InterPro" id="IPR036100">
    <property type="entry name" value="QueA_sf"/>
</dbReference>
<dbReference type="NCBIfam" id="NF001140">
    <property type="entry name" value="PRK00147.1"/>
    <property type="match status" value="1"/>
</dbReference>
<dbReference type="NCBIfam" id="TIGR00113">
    <property type="entry name" value="queA"/>
    <property type="match status" value="1"/>
</dbReference>
<dbReference type="PANTHER" id="PTHR30307">
    <property type="entry name" value="S-ADENOSYLMETHIONINE:TRNA RIBOSYLTRANSFERASE-ISOMERASE"/>
    <property type="match status" value="1"/>
</dbReference>
<dbReference type="PANTHER" id="PTHR30307:SF0">
    <property type="entry name" value="S-ADENOSYLMETHIONINE:TRNA RIBOSYLTRANSFERASE-ISOMERASE"/>
    <property type="match status" value="1"/>
</dbReference>
<dbReference type="Pfam" id="PF02547">
    <property type="entry name" value="Queuosine_synth"/>
    <property type="match status" value="1"/>
</dbReference>
<dbReference type="SUPFAM" id="SSF111337">
    <property type="entry name" value="QueA-like"/>
    <property type="match status" value="1"/>
</dbReference>
<organism>
    <name type="scientific">Methylorubrum populi (strain ATCC BAA-705 / NCIMB 13946 / BJ001)</name>
    <name type="common">Methylobacterium populi</name>
    <dbReference type="NCBI Taxonomy" id="441620"/>
    <lineage>
        <taxon>Bacteria</taxon>
        <taxon>Pseudomonadati</taxon>
        <taxon>Pseudomonadota</taxon>
        <taxon>Alphaproteobacteria</taxon>
        <taxon>Hyphomicrobiales</taxon>
        <taxon>Methylobacteriaceae</taxon>
        <taxon>Methylorubrum</taxon>
    </lineage>
</organism>
<comment type="function">
    <text evidence="1">Transfers and isomerizes the ribose moiety from AdoMet to the 7-aminomethyl group of 7-deazaguanine (preQ1-tRNA) to give epoxyqueuosine (oQ-tRNA).</text>
</comment>
<comment type="catalytic activity">
    <reaction evidence="1">
        <text>7-aminomethyl-7-carbaguanosine(34) in tRNA + S-adenosyl-L-methionine = epoxyqueuosine(34) in tRNA + adenine + L-methionine + 2 H(+)</text>
        <dbReference type="Rhea" id="RHEA:32155"/>
        <dbReference type="Rhea" id="RHEA-COMP:10342"/>
        <dbReference type="Rhea" id="RHEA-COMP:18582"/>
        <dbReference type="ChEBI" id="CHEBI:15378"/>
        <dbReference type="ChEBI" id="CHEBI:16708"/>
        <dbReference type="ChEBI" id="CHEBI:57844"/>
        <dbReference type="ChEBI" id="CHEBI:59789"/>
        <dbReference type="ChEBI" id="CHEBI:82833"/>
        <dbReference type="ChEBI" id="CHEBI:194443"/>
        <dbReference type="EC" id="2.4.99.17"/>
    </reaction>
</comment>
<comment type="pathway">
    <text evidence="1">tRNA modification; tRNA-queuosine biosynthesis.</text>
</comment>
<comment type="subunit">
    <text evidence="1">Monomer.</text>
</comment>
<comment type="subcellular location">
    <subcellularLocation>
        <location evidence="1">Cytoplasm</location>
    </subcellularLocation>
</comment>
<comment type="similarity">
    <text evidence="1">Belongs to the QueA family.</text>
</comment>
<name>QUEA_METPB</name>
<accession>B1ZIL2</accession>
<evidence type="ECO:0000255" key="1">
    <source>
        <dbReference type="HAMAP-Rule" id="MF_00113"/>
    </source>
</evidence>
<protein>
    <recommendedName>
        <fullName evidence="1">S-adenosylmethionine:tRNA ribosyltransferase-isomerase</fullName>
        <ecNumber evidence="1">2.4.99.17</ecNumber>
    </recommendedName>
    <alternativeName>
        <fullName evidence="1">Queuosine biosynthesis protein QueA</fullName>
    </alternativeName>
</protein>
<proteinExistence type="inferred from homology"/>
<sequence>MRVDLFDFELPEAAIALRPASPRDASRLLVVRPGETLADRGVRDLPALLNPGDALVFNDTRVIPARLSGIRHRAGGTGQRCEAMLHLREAPDRWRAFARPAKRLAPGDRIRFGGEGANQGASEVCVLSGLDATVEERGEGGEILLRFDLAGPALDEAIAGLGALPLPPYIAGKRATDARDTTDYQTVYAREPGAVAAPTAGLHFSDALLDGIDAAGIERIHVTLHVGAGTFLPVKADDTEAHRMHAEIGILDTATAERLNAVRARGNRIVAVGTTALRLLESATDPDGTVRPFSGATDIFITPGYRFRAVDALVTNFHLPRSTLFMLVSAFSGLDTMRAAYAHAIASGYRFYSYGDASLLFPERAP</sequence>
<feature type="chain" id="PRO_1000094789" description="S-adenosylmethionine:tRNA ribosyltransferase-isomerase">
    <location>
        <begin position="1"/>
        <end position="366"/>
    </location>
</feature>
<keyword id="KW-0963">Cytoplasm</keyword>
<keyword id="KW-0671">Queuosine biosynthesis</keyword>
<keyword id="KW-0949">S-adenosyl-L-methionine</keyword>
<keyword id="KW-0808">Transferase</keyword>